<keyword id="KW-0010">Activator</keyword>
<keyword id="KW-0067">ATP-binding</keyword>
<keyword id="KW-0963">Cytoplasm</keyword>
<keyword id="KW-0238">DNA-binding</keyword>
<keyword id="KW-0535">Nitrogen fixation</keyword>
<keyword id="KW-0547">Nucleotide-binding</keyword>
<keyword id="KW-0597">Phosphoprotein</keyword>
<keyword id="KW-0678">Repressor</keyword>
<keyword id="KW-0804">Transcription</keyword>
<keyword id="KW-0805">Transcription regulation</keyword>
<keyword id="KW-0902">Two-component regulatory system</keyword>
<sequence length="481" mass="53309">MSAATILVADDDRAIRTVLTQALARLGHEVRTTGNASTLWRWVADGQGDLIITDVVMPDENGLDLIPRIKKIRPDLRIIVMSAQNTLITAVKAAERGAFEYLPKPFDLKELVSVVERALNSNTPPAALPADAGEADEQLPLIGRSPAMQEIYRVLARLMGTDLTVTITGESGTGKELVARALHDYGKRRNGPFVAINMAAIPRELIESELFGHEKGAFTGATNRSTGRFEQAQGGTLFLDEIGDMPLEAQTRLLRVLQEGEYTTVGGRTPIKTDVRIVAATHRDLRTLIRQGLFREDLFYRLCVVPIRLPPLRERTEDVPLLVRHFLNQCSAQGLPVKSIDQPAMDRLKRYRWPGNVRELENLVRRLAALYSQEVIGLDVVEAELADTTPAAQPVEEPQGEGLSAAVERHLKDYFAAHKDGMPSNGLYDRVLREVERPLISLSLSATRGNQIKAAQLLGLNRNTLRKKIRDLDIQVVRGLK</sequence>
<accession>P45671</accession>
<comment type="function">
    <text evidence="2">Member of the two-component regulatory system NtrB/NtrC, which controls expression of the nitrogen-regulated (ntr) genes in response to nitrogen limitation. Phosphorylated NtrC binds directly to DNA and stimulates the formation of open promoter-sigma54-RNA polymerase complexes.</text>
</comment>
<comment type="subcellular location">
    <subcellularLocation>
        <location evidence="2">Cytoplasm</location>
    </subcellularLocation>
</comment>
<comment type="PTM">
    <text evidence="2">Phosphorylated and dephosphorylated by NtrB.</text>
</comment>
<name>NTRC_AZOBR</name>
<organism>
    <name type="scientific">Azospirillum brasilense</name>
    <dbReference type="NCBI Taxonomy" id="192"/>
    <lineage>
        <taxon>Bacteria</taxon>
        <taxon>Pseudomonadati</taxon>
        <taxon>Pseudomonadota</taxon>
        <taxon>Alphaproteobacteria</taxon>
        <taxon>Rhodospirillales</taxon>
        <taxon>Azospirillaceae</taxon>
        <taxon>Azospirillum</taxon>
    </lineage>
</organism>
<protein>
    <recommendedName>
        <fullName evidence="2">DNA-binding transcriptional regulator NtrC</fullName>
    </recommendedName>
    <alternativeName>
        <fullName evidence="2">Nitrogen regulation protein NR(I)</fullName>
    </alternativeName>
    <alternativeName>
        <fullName evidence="2">Nitrogen regulator I</fullName>
        <shortName evidence="2">NRI</shortName>
    </alternativeName>
</protein>
<feature type="chain" id="PRO_0000081170" description="DNA-binding transcriptional regulator NtrC">
    <location>
        <begin position="1"/>
        <end position="481"/>
    </location>
</feature>
<feature type="domain" description="Response regulatory" evidence="3">
    <location>
        <begin position="5"/>
        <end position="119"/>
    </location>
</feature>
<feature type="domain" description="Sigma-54 factor interaction" evidence="4">
    <location>
        <begin position="141"/>
        <end position="369"/>
    </location>
</feature>
<feature type="DNA-binding region" description="H-T-H motif" evidence="1">
    <location>
        <begin position="451"/>
        <end position="470"/>
    </location>
</feature>
<feature type="binding site" evidence="4">
    <location>
        <begin position="169"/>
        <end position="176"/>
    </location>
    <ligand>
        <name>ATP</name>
        <dbReference type="ChEBI" id="CHEBI:30616"/>
    </ligand>
</feature>
<feature type="binding site" evidence="4">
    <location>
        <begin position="232"/>
        <end position="241"/>
    </location>
    <ligand>
        <name>ATP</name>
        <dbReference type="ChEBI" id="CHEBI:30616"/>
    </ligand>
</feature>
<feature type="modified residue" description="4-aspartylphosphate" evidence="3">
    <location>
        <position position="54"/>
    </location>
</feature>
<proteinExistence type="inferred from homology"/>
<dbReference type="EMBL" id="Z37984">
    <property type="protein sequence ID" value="CAA86065.1"/>
    <property type="molecule type" value="Genomic_DNA"/>
</dbReference>
<dbReference type="PIR" id="I39494">
    <property type="entry name" value="I39494"/>
</dbReference>
<dbReference type="RefSeq" id="WP_014197046.1">
    <property type="nucleotide sequence ID" value="NZ_WFKD01000007.1"/>
</dbReference>
<dbReference type="SMR" id="P45671"/>
<dbReference type="GeneID" id="56453393"/>
<dbReference type="OrthoDB" id="9770562at2"/>
<dbReference type="GO" id="GO:0005737">
    <property type="term" value="C:cytoplasm"/>
    <property type="evidence" value="ECO:0007669"/>
    <property type="project" value="UniProtKB-SubCell"/>
</dbReference>
<dbReference type="GO" id="GO:0005524">
    <property type="term" value="F:ATP binding"/>
    <property type="evidence" value="ECO:0007669"/>
    <property type="project" value="UniProtKB-KW"/>
</dbReference>
<dbReference type="GO" id="GO:0016887">
    <property type="term" value="F:ATP hydrolysis activity"/>
    <property type="evidence" value="ECO:0007669"/>
    <property type="project" value="InterPro"/>
</dbReference>
<dbReference type="GO" id="GO:0000156">
    <property type="term" value="F:phosphorelay response regulator activity"/>
    <property type="evidence" value="ECO:0007669"/>
    <property type="project" value="InterPro"/>
</dbReference>
<dbReference type="GO" id="GO:0043565">
    <property type="term" value="F:sequence-specific DNA binding"/>
    <property type="evidence" value="ECO:0007669"/>
    <property type="project" value="InterPro"/>
</dbReference>
<dbReference type="GO" id="GO:0009399">
    <property type="term" value="P:nitrogen fixation"/>
    <property type="evidence" value="ECO:0007669"/>
    <property type="project" value="UniProtKB-KW"/>
</dbReference>
<dbReference type="GO" id="GO:0006355">
    <property type="term" value="P:regulation of DNA-templated transcription"/>
    <property type="evidence" value="ECO:0007669"/>
    <property type="project" value="InterPro"/>
</dbReference>
<dbReference type="GO" id="GO:0006808">
    <property type="term" value="P:regulation of nitrogen utilization"/>
    <property type="evidence" value="ECO:0007669"/>
    <property type="project" value="InterPro"/>
</dbReference>
<dbReference type="CDD" id="cd00009">
    <property type="entry name" value="AAA"/>
    <property type="match status" value="1"/>
</dbReference>
<dbReference type="CDD" id="cd19928">
    <property type="entry name" value="REC_RcNtrC-like"/>
    <property type="match status" value="1"/>
</dbReference>
<dbReference type="FunFam" id="3.40.50.300:FF:000006">
    <property type="entry name" value="DNA-binding transcriptional regulator NtrC"/>
    <property type="match status" value="1"/>
</dbReference>
<dbReference type="Gene3D" id="1.10.8.60">
    <property type="match status" value="1"/>
</dbReference>
<dbReference type="Gene3D" id="3.40.50.2300">
    <property type="match status" value="1"/>
</dbReference>
<dbReference type="Gene3D" id="1.10.10.60">
    <property type="entry name" value="Homeodomain-like"/>
    <property type="match status" value="1"/>
</dbReference>
<dbReference type="Gene3D" id="3.40.50.300">
    <property type="entry name" value="P-loop containing nucleotide triphosphate hydrolases"/>
    <property type="match status" value="1"/>
</dbReference>
<dbReference type="InterPro" id="IPR003593">
    <property type="entry name" value="AAA+_ATPase"/>
</dbReference>
<dbReference type="InterPro" id="IPR011006">
    <property type="entry name" value="CheY-like_superfamily"/>
</dbReference>
<dbReference type="InterPro" id="IPR009057">
    <property type="entry name" value="Homeodomain-like_sf"/>
</dbReference>
<dbReference type="InterPro" id="IPR002197">
    <property type="entry name" value="HTH_Fis"/>
</dbReference>
<dbReference type="InterPro" id="IPR027417">
    <property type="entry name" value="P-loop_NTPase"/>
</dbReference>
<dbReference type="InterPro" id="IPR001789">
    <property type="entry name" value="Sig_transdc_resp-reg_receiver"/>
</dbReference>
<dbReference type="InterPro" id="IPR002078">
    <property type="entry name" value="Sigma_54_int"/>
</dbReference>
<dbReference type="InterPro" id="IPR025943">
    <property type="entry name" value="Sigma_54_int_dom_ATP-bd_2"/>
</dbReference>
<dbReference type="InterPro" id="IPR025944">
    <property type="entry name" value="Sigma_54_int_dom_CS"/>
</dbReference>
<dbReference type="InterPro" id="IPR010114">
    <property type="entry name" value="Transcript_reg_NtrC"/>
</dbReference>
<dbReference type="NCBIfam" id="TIGR01818">
    <property type="entry name" value="ntrC"/>
    <property type="match status" value="1"/>
</dbReference>
<dbReference type="PANTHER" id="PTHR32071:SF95">
    <property type="entry name" value="DNA-BINDING TRANSCRIPTIONAL REGULATOR NTRC"/>
    <property type="match status" value="1"/>
</dbReference>
<dbReference type="PANTHER" id="PTHR32071">
    <property type="entry name" value="TRANSCRIPTIONAL REGULATORY PROTEIN"/>
    <property type="match status" value="1"/>
</dbReference>
<dbReference type="Pfam" id="PF02954">
    <property type="entry name" value="HTH_8"/>
    <property type="match status" value="1"/>
</dbReference>
<dbReference type="Pfam" id="PF00072">
    <property type="entry name" value="Response_reg"/>
    <property type="match status" value="1"/>
</dbReference>
<dbReference type="Pfam" id="PF00158">
    <property type="entry name" value="Sigma54_activat"/>
    <property type="match status" value="1"/>
</dbReference>
<dbReference type="PRINTS" id="PR01590">
    <property type="entry name" value="HTHFIS"/>
</dbReference>
<dbReference type="SMART" id="SM00382">
    <property type="entry name" value="AAA"/>
    <property type="match status" value="1"/>
</dbReference>
<dbReference type="SMART" id="SM00448">
    <property type="entry name" value="REC"/>
    <property type="match status" value="1"/>
</dbReference>
<dbReference type="SUPFAM" id="SSF52172">
    <property type="entry name" value="CheY-like"/>
    <property type="match status" value="1"/>
</dbReference>
<dbReference type="SUPFAM" id="SSF46689">
    <property type="entry name" value="Homeodomain-like"/>
    <property type="match status" value="1"/>
</dbReference>
<dbReference type="SUPFAM" id="SSF52540">
    <property type="entry name" value="P-loop containing nucleoside triphosphate hydrolases"/>
    <property type="match status" value="1"/>
</dbReference>
<dbReference type="PROSITE" id="PS50110">
    <property type="entry name" value="RESPONSE_REGULATORY"/>
    <property type="match status" value="1"/>
</dbReference>
<dbReference type="PROSITE" id="PS00676">
    <property type="entry name" value="SIGMA54_INTERACT_2"/>
    <property type="match status" value="1"/>
</dbReference>
<dbReference type="PROSITE" id="PS00688">
    <property type="entry name" value="SIGMA54_INTERACT_3"/>
    <property type="match status" value="1"/>
</dbReference>
<dbReference type="PROSITE" id="PS50045">
    <property type="entry name" value="SIGMA54_INTERACT_4"/>
    <property type="match status" value="1"/>
</dbReference>
<gene>
    <name type="primary">ntrC</name>
</gene>
<reference key="1">
    <citation type="journal article" date="1995" name="Can. J. Microbiol.">
        <title>The ntrBC genes of Azospirillum brasilense are part of a nifR3-like-ntrB-ntrC operon and are negatively regulated.</title>
        <authorList>
            <person name="Machado H.B."/>
            <person name="Yates M.G."/>
            <person name="Funayama S."/>
            <person name="Rigo L.U."/>
            <person name="Steffens M.B.R."/>
            <person name="Souza E.M."/>
            <person name="Pedrosa F.O."/>
        </authorList>
    </citation>
    <scope>NUCLEOTIDE SEQUENCE [GENOMIC DNA]</scope>
    <source>
        <strain>ATCC 29145 / DSM 1690 / IMET 11303 / Sp7</strain>
    </source>
</reference>
<evidence type="ECO:0000250" key="1"/>
<evidence type="ECO:0000250" key="2">
    <source>
        <dbReference type="UniProtKB" id="P0AFB8"/>
    </source>
</evidence>
<evidence type="ECO:0000255" key="3">
    <source>
        <dbReference type="PROSITE-ProRule" id="PRU00169"/>
    </source>
</evidence>
<evidence type="ECO:0000255" key="4">
    <source>
        <dbReference type="PROSITE-ProRule" id="PRU00193"/>
    </source>
</evidence>